<accession>B7IRX2</accession>
<proteinExistence type="inferred from homology"/>
<gene>
    <name evidence="1" type="primary">lrgA</name>
    <name type="ordered locus">BCG9842_B5385</name>
</gene>
<feature type="chain" id="PRO_1000137344" description="Antiholin-like protein LrgA">
    <location>
        <begin position="1"/>
        <end position="143"/>
    </location>
</feature>
<feature type="transmembrane region" description="Helical" evidence="1">
    <location>
        <begin position="6"/>
        <end position="26"/>
    </location>
</feature>
<feature type="transmembrane region" description="Helical" evidence="1">
    <location>
        <begin position="30"/>
        <end position="50"/>
    </location>
</feature>
<feature type="transmembrane region" description="Helical" evidence="1">
    <location>
        <begin position="61"/>
        <end position="81"/>
    </location>
</feature>
<feature type="transmembrane region" description="Helical" evidence="1">
    <location>
        <begin position="97"/>
        <end position="117"/>
    </location>
</feature>
<name>LRGA_BACC2</name>
<evidence type="ECO:0000255" key="1">
    <source>
        <dbReference type="HAMAP-Rule" id="MF_01141"/>
    </source>
</evidence>
<protein>
    <recommendedName>
        <fullName evidence="1">Antiholin-like protein LrgA</fullName>
    </recommendedName>
</protein>
<keyword id="KW-1003">Cell membrane</keyword>
<keyword id="KW-0204">Cytolysis</keyword>
<keyword id="KW-0472">Membrane</keyword>
<keyword id="KW-0812">Transmembrane</keyword>
<keyword id="KW-1133">Transmembrane helix</keyword>
<dbReference type="EMBL" id="CP001186">
    <property type="protein sequence ID" value="ACK96110.1"/>
    <property type="molecule type" value="Genomic_DNA"/>
</dbReference>
<dbReference type="RefSeq" id="WP_000104901.1">
    <property type="nucleotide sequence ID" value="NC_011772.1"/>
</dbReference>
<dbReference type="SMR" id="B7IRX2"/>
<dbReference type="GeneID" id="93005686"/>
<dbReference type="KEGG" id="bcg:BCG9842_B5385"/>
<dbReference type="HOGENOM" id="CLU_113736_0_1_9"/>
<dbReference type="Proteomes" id="UP000006744">
    <property type="component" value="Chromosome"/>
</dbReference>
<dbReference type="GO" id="GO:0005886">
    <property type="term" value="C:plasma membrane"/>
    <property type="evidence" value="ECO:0007669"/>
    <property type="project" value="UniProtKB-SubCell"/>
</dbReference>
<dbReference type="GO" id="GO:0019835">
    <property type="term" value="P:cytolysis"/>
    <property type="evidence" value="ECO:0007669"/>
    <property type="project" value="UniProtKB-UniRule"/>
</dbReference>
<dbReference type="GO" id="GO:0031640">
    <property type="term" value="P:killing of cells of another organism"/>
    <property type="evidence" value="ECO:0007669"/>
    <property type="project" value="UniProtKB-KW"/>
</dbReference>
<dbReference type="GO" id="GO:0012501">
    <property type="term" value="P:programmed cell death"/>
    <property type="evidence" value="ECO:0007669"/>
    <property type="project" value="UniProtKB-UniRule"/>
</dbReference>
<dbReference type="HAMAP" id="MF_01141">
    <property type="entry name" value="LrgA"/>
    <property type="match status" value="1"/>
</dbReference>
<dbReference type="InterPro" id="IPR023736">
    <property type="entry name" value="Antiholin-like_LrgA"/>
</dbReference>
<dbReference type="InterPro" id="IPR005538">
    <property type="entry name" value="LrgA/CidA"/>
</dbReference>
<dbReference type="NCBIfam" id="NF003155">
    <property type="entry name" value="PRK04125.1"/>
    <property type="match status" value="1"/>
</dbReference>
<dbReference type="PANTHER" id="PTHR33931:SF4">
    <property type="entry name" value="ANTIHOLIN-LIKE PROTEIN LRGA"/>
    <property type="match status" value="1"/>
</dbReference>
<dbReference type="PANTHER" id="PTHR33931">
    <property type="entry name" value="HOLIN-LIKE PROTEIN CIDA-RELATED"/>
    <property type="match status" value="1"/>
</dbReference>
<dbReference type="Pfam" id="PF03788">
    <property type="entry name" value="LrgA"/>
    <property type="match status" value="1"/>
</dbReference>
<reference key="1">
    <citation type="submission" date="2008-10" db="EMBL/GenBank/DDBJ databases">
        <title>Genome sequence of Bacillus cereus G9842.</title>
        <authorList>
            <person name="Dodson R.J."/>
            <person name="Durkin A.S."/>
            <person name="Rosovitz M.J."/>
            <person name="Rasko D.A."/>
            <person name="Hoffmaster A."/>
            <person name="Ravel J."/>
            <person name="Sutton G."/>
        </authorList>
    </citation>
    <scope>NUCLEOTIDE SEQUENCE [LARGE SCALE GENOMIC DNA]</scope>
    <source>
        <strain>G9842</strain>
    </source>
</reference>
<comment type="function">
    <text evidence="1">Inhibits the expression or activity of extracellular murein hydrolases by interacting, possibly with LrgB, with the holin-like protein CidA. The LrgAB and CidA proteins may affect the proton motive force of the membrane. May be involved in programmed cell death (PCD), possibly triggering PCD in response to antibiotics and environmental stresses.</text>
</comment>
<comment type="subcellular location">
    <subcellularLocation>
        <location evidence="1">Cell membrane</location>
        <topology evidence="1">Multi-pass membrane protein</topology>
    </subcellularLocation>
</comment>
<comment type="similarity">
    <text evidence="1">Belongs to the CidA/LrgA family. LrgA subfamily.</text>
</comment>
<organism>
    <name type="scientific">Bacillus cereus (strain G9842)</name>
    <dbReference type="NCBI Taxonomy" id="405531"/>
    <lineage>
        <taxon>Bacteria</taxon>
        <taxon>Bacillati</taxon>
        <taxon>Bacillota</taxon>
        <taxon>Bacilli</taxon>
        <taxon>Bacillales</taxon>
        <taxon>Bacillaceae</taxon>
        <taxon>Bacillus</taxon>
        <taxon>Bacillus cereus group</taxon>
    </lineage>
</organism>
<sequence length="143" mass="15424">MSTKKVYSFLSQAFIFSAIMLISNIIATHLPIPMPSSVIGLVILFSLLCLKVIKLEQVESLGTALTGIIGFLFVPSGISVINSLGVMGQYFVQILTVIVVATVILLAVTGLFAQFILGKDEKETEDTKELKVVNKGRKHGKVA</sequence>